<proteinExistence type="inferred from homology"/>
<dbReference type="EMBL" id="M15390">
    <property type="protein sequence ID" value="AAB00771.1"/>
    <property type="molecule type" value="Genomic_DNA"/>
</dbReference>
<dbReference type="EMBL" id="X05291">
    <property type="protein sequence ID" value="CAA28915.1"/>
    <property type="molecule type" value="Genomic_RNA"/>
</dbReference>
<dbReference type="PIR" id="D26262">
    <property type="entry name" value="ASLJH2"/>
</dbReference>
<dbReference type="SMR" id="P04600"/>
<dbReference type="Proteomes" id="UP000007426">
    <property type="component" value="Genome"/>
</dbReference>
<dbReference type="Proteomes" id="UP000246871">
    <property type="component" value="Segment"/>
</dbReference>
<dbReference type="GO" id="GO:0020002">
    <property type="term" value="C:host cell plasma membrane"/>
    <property type="evidence" value="ECO:0007669"/>
    <property type="project" value="UniProtKB-SubCell"/>
</dbReference>
<dbReference type="GO" id="GO:0016020">
    <property type="term" value="C:membrane"/>
    <property type="evidence" value="ECO:0007669"/>
    <property type="project" value="UniProtKB-KW"/>
</dbReference>
<dbReference type="GO" id="GO:0005525">
    <property type="term" value="F:GTP binding"/>
    <property type="evidence" value="ECO:0007669"/>
    <property type="project" value="InterPro"/>
</dbReference>
<dbReference type="Gene3D" id="3.30.62.10">
    <property type="entry name" value="Nef Regulatory Factor"/>
    <property type="match status" value="1"/>
</dbReference>
<dbReference type="InterPro" id="IPR027481">
    <property type="entry name" value="HIV-1_Nef_core_sf"/>
</dbReference>
<dbReference type="InterPro" id="IPR001558">
    <property type="entry name" value="HIV_Nef"/>
</dbReference>
<dbReference type="Pfam" id="PF00469">
    <property type="entry name" value="F-protein"/>
    <property type="match status" value="1"/>
</dbReference>
<dbReference type="SUPFAM" id="SSF55671">
    <property type="entry name" value="Regulatory factor Nef"/>
    <property type="match status" value="1"/>
</dbReference>
<protein>
    <recommendedName>
        <fullName>Protein Nef</fullName>
    </recommendedName>
    <alternativeName>
        <fullName>3'ORF</fullName>
    </alternativeName>
    <alternativeName>
        <fullName>Negative factor</fullName>
        <shortName>F-protein</shortName>
    </alternativeName>
</protein>
<organismHost>
    <name type="scientific">Homo sapiens</name>
    <name type="common">Human</name>
    <dbReference type="NCBI Taxonomy" id="9606"/>
</organismHost>
<comment type="function">
    <text evidence="1">Factor of infectivity and pathogenicity, required for optimal virus replication. Alters numerous pathways of T-lymphocyte function and down-regulates immunity surface molecules in order to evade host defense and increase viral infectivity. Alters the functionality of other immunity cells, like dendritic cells, monocytes/macrophages and NK cells. One of the earliest and most abundantly expressed viral proteins (By similarity).</text>
</comment>
<comment type="function">
    <text evidence="5">In infected CD4(+) T-lymphocytes, down-regulates cell surface expression of CD4, CD28, CD3, and MHC-I or MHC-II molecules.</text>
</comment>
<comment type="function">
    <text evidence="3">Interferes with TCR signaling from the cell membrane. Interacts with CD247/TCRZ (TCR zeta chain) and exert potent down-regulation of cell surface TCR/CD3 complexes.</text>
</comment>
<comment type="function">
    <text evidence="1">Plays a role in optimizing the host cell environment for viral replication without causing cell death by apoptosis. Protects the infected cells from apoptosis in order to keep them alive until the next virus generation is ready to strike (By similarity).</text>
</comment>
<comment type="function">
    <text evidence="1">Extracellular Nef protein targets CD4(+) T-lymphocytes for apoptosis by interacting with CXCR4 surface receptors.</text>
</comment>
<comment type="subunit">
    <text evidence="1">Homodimer. Interacts with host CD247/TCRZ; this interaction induces down-regulation of cell surface TCR/CD3 complexes.</text>
</comment>
<comment type="subcellular location">
    <subcellularLocation>
        <location evidence="1">Host cell membrane</location>
        <topology evidence="1">Lipid-anchor</topology>
        <orientation evidence="1">Cytoplasmic side</orientation>
    </subcellularLocation>
    <text evidence="1">Associates with the inner plasma membrane through its N-terminal domain.</text>
</comment>
<comment type="domain">
    <text evidence="1">The N-terminal domain is composed of the N-myristoyl glycine and of a cluster of positively charged amino acids. It is required for inner plasma membrane targeting of Nef and virion incorporation, and thereby for infectivity (By similarity).</text>
</comment>
<comment type="similarity">
    <text evidence="4">Belongs to the lentivirus primate group Nef protein family.</text>
</comment>
<reference key="1">
    <citation type="journal article" date="1987" name="Nature">
        <title>Genome organization and transactivation of the human immunodeficiency virus type 2.</title>
        <authorList>
            <person name="Guyader M."/>
            <person name="Emerman M."/>
            <person name="Sonigo P."/>
            <person name="Clavel F."/>
            <person name="Montagnier L."/>
            <person name="Alizon M."/>
        </authorList>
    </citation>
    <scope>NUCLEOTIDE SEQUENCE [GENOMIC DNA]</scope>
</reference>
<reference key="2">
    <citation type="journal article" date="2005" name="J. Virol.">
        <title>Primary sooty mangabey simian immunodeficiency virus and human immunodeficiency virus type 2 nef alleles modulate cell surface expression of various human receptors and enhance viral infectivity and replication.</title>
        <authorList>
            <person name="Munch J."/>
            <person name="Schindler M."/>
            <person name="Wildum S."/>
            <person name="Rucker E."/>
            <person name="Bailer N."/>
            <person name="Knoop V."/>
            <person name="Novembre F.J."/>
            <person name="Kirchhoff F."/>
        </authorList>
    </citation>
    <scope>FUNCTION</scope>
</reference>
<sequence length="256" mass="29566">MGASGSKKHSRPPRGLQERLLRARAGACGGYWNESGGEYSRFQEGSDREQKSPSCEGRQYQQGDFMNTPWKDPAAEREKNLYRQQNMDDVDSDDDDQVRVSVTPKVPLRPMTHRLAIDMSHLIKTRGGLEGMFYSERRHKILNIYLEKEEGIIADWQNYTHGPGVRYPMFFGWLWKLVPVDVPQEGEDTETHCLVHPAQTSKFDDPHGETLVWEFDPLLAYSYEAFIRYPEEFGHKSGLPEEEWKARLKARGIPFS</sequence>
<accession>P04600</accession>
<keyword id="KW-0014">AIDS</keyword>
<keyword id="KW-1032">Host cell membrane</keyword>
<keyword id="KW-1043">Host membrane</keyword>
<keyword id="KW-0945">Host-virus interaction</keyword>
<keyword id="KW-0449">Lipoprotein</keyword>
<keyword id="KW-0472">Membrane</keyword>
<keyword id="KW-0519">Myristate</keyword>
<keyword id="KW-0899">Viral immunoevasion</keyword>
<keyword id="KW-0843">Virulence</keyword>
<name>NEF_HV2RO</name>
<feature type="initiator methionine" description="Removed; by host" evidence="1">
    <location>
        <position position="1"/>
    </location>
</feature>
<feature type="chain" id="PRO_0000085237" description="Protein Nef">
    <location>
        <begin position="2"/>
        <end position="256"/>
    </location>
</feature>
<feature type="region of interest" description="Disordered" evidence="2">
    <location>
        <begin position="36"/>
        <end position="71"/>
    </location>
</feature>
<feature type="region of interest" description="Acidic">
    <location>
        <begin position="88"/>
        <end position="96"/>
    </location>
</feature>
<feature type="region of interest" description="Mediates dimerization" evidence="1">
    <location>
        <begin position="140"/>
        <end position="156"/>
    </location>
</feature>
<feature type="short sequence motif" description="PxxP">
    <location>
        <begin position="104"/>
        <end position="107"/>
    </location>
</feature>
<feature type="lipid moiety-binding region" description="N-myristoyl glycine; by host" evidence="1">
    <location>
        <position position="2"/>
    </location>
</feature>
<evidence type="ECO:0000250" key="1"/>
<evidence type="ECO:0000256" key="2">
    <source>
        <dbReference type="SAM" id="MobiDB-lite"/>
    </source>
</evidence>
<evidence type="ECO:0000269" key="3">
    <source>
    </source>
</evidence>
<evidence type="ECO:0000305" key="4"/>
<evidence type="ECO:0000305" key="5">
    <source>
    </source>
</evidence>
<organism>
    <name type="scientific">Human immunodeficiency virus type 2 subtype A (isolate ROD)</name>
    <name type="common">HIV-2</name>
    <dbReference type="NCBI Taxonomy" id="11720"/>
    <lineage>
        <taxon>Viruses</taxon>
        <taxon>Riboviria</taxon>
        <taxon>Pararnavirae</taxon>
        <taxon>Artverviricota</taxon>
        <taxon>Revtraviricetes</taxon>
        <taxon>Ortervirales</taxon>
        <taxon>Retroviridae</taxon>
        <taxon>Orthoretrovirinae</taxon>
        <taxon>Lentivirus</taxon>
        <taxon>Human immunodeficiency virus 2</taxon>
    </lineage>
</organism>
<gene>
    <name type="primary">nef</name>
</gene>